<protein>
    <recommendedName>
        <fullName evidence="1">Isoleucine--tRNA ligase</fullName>
        <ecNumber evidence="1">6.1.1.5</ecNumber>
    </recommendedName>
    <alternativeName>
        <fullName evidence="1">Isoleucyl-tRNA synthetase</fullName>
        <shortName evidence="1">IleRS</shortName>
    </alternativeName>
</protein>
<organism>
    <name type="scientific">Shewanella baltica (strain OS185)</name>
    <dbReference type="NCBI Taxonomy" id="402882"/>
    <lineage>
        <taxon>Bacteria</taxon>
        <taxon>Pseudomonadati</taxon>
        <taxon>Pseudomonadota</taxon>
        <taxon>Gammaproteobacteria</taxon>
        <taxon>Alteromonadales</taxon>
        <taxon>Shewanellaceae</taxon>
        <taxon>Shewanella</taxon>
    </lineage>
</organism>
<sequence>MSDYKFTLNLPETEFPMRGNLANREPEMLERWTKDGLYQQIRDSRIGRTPFILHDGPPYANGSIHIGHSVNKILKDIIIKSKTMSGFDAPYVPGWDCHGLPIELKVEQKVGKPGQKISAAEFREECRKYAAEQVNGQREDFIRLGVLGDWQNPYLTMDFSTEANIVRSLSKVIESGHLHKGVKPVHWCTDCGSALAEAEVEYEDKTSPAIDVAFVAADSKAVAAKFGVSGYSHPVSMVIWTTTPWTLPANRALSLSPELDYSLVEFEKDGVTQALILAEVLVESCLTRYNVESHTVLGSAKGAAFELVRFNHPFLDFDVPAILGDHVTTDAGTGIVHTAPGHGQDDFVVGQKYGLEVANPVGDNGVYKPDTEYFAGQHVFKANDNVVALLREKSALLNHVAYRHSYPHCWRHKTPIIFRATPQWFISMDNHGLRTQALKEIEQTQWIPDWGQSRIEKMVENRPDWCISRQRTWGVPITLFVNRETEELHSDSVSLMERVASRIEQQGIQAWWDLDAAELLGDEAEQYRKVTDTLDVWFDSGSTFSSVVAARPEFHGHGVDLYLEGSDQHRGWFMSSLMISTAMNGKAPYKQVLTHGFTVDGKGRKMSKSIGNVIAPQTVTNKLGADILRLWVAATDYSGEMTVSDEILNRSADAYRRIRNTARFLLANLNGFEPAKDLVAVEDMVALDRWVVRRAAALQQEIIEAYEQYNFHIVTQKLMQFCSVELGSFYLDIIKDRQYTAKQEGHARRSCQSALYLISEAMVRWIAPILSFTADEVWQLLPGERDAYVFTQEWYQGLKSVTLATDLSDDYWQQLLTVRNEVNKVIEQARRDKRIGGSLEAEVTLFADAALTEQLTHIGDELRFVLLTSEAKVLPLADATSEAVETELASLKLLVASSTAEKCERCWHHREEVGTIEAHPTLCTRCVTNIEGDGEVRLFA</sequence>
<proteinExistence type="inferred from homology"/>
<keyword id="KW-0030">Aminoacyl-tRNA synthetase</keyword>
<keyword id="KW-0067">ATP-binding</keyword>
<keyword id="KW-0963">Cytoplasm</keyword>
<keyword id="KW-0436">Ligase</keyword>
<keyword id="KW-0479">Metal-binding</keyword>
<keyword id="KW-0547">Nucleotide-binding</keyword>
<keyword id="KW-0648">Protein biosynthesis</keyword>
<keyword id="KW-0862">Zinc</keyword>
<accession>A6WKD4</accession>
<reference key="1">
    <citation type="submission" date="2007-07" db="EMBL/GenBank/DDBJ databases">
        <title>Complete sequence of chromosome of Shewanella baltica OS185.</title>
        <authorList>
            <consortium name="US DOE Joint Genome Institute"/>
            <person name="Copeland A."/>
            <person name="Lucas S."/>
            <person name="Lapidus A."/>
            <person name="Barry K."/>
            <person name="Glavina del Rio T."/>
            <person name="Dalin E."/>
            <person name="Tice H."/>
            <person name="Pitluck S."/>
            <person name="Sims D."/>
            <person name="Brettin T."/>
            <person name="Bruce D."/>
            <person name="Detter J.C."/>
            <person name="Han C."/>
            <person name="Schmutz J."/>
            <person name="Larimer F."/>
            <person name="Land M."/>
            <person name="Hauser L."/>
            <person name="Kyrpides N."/>
            <person name="Mikhailova N."/>
            <person name="Brettar I."/>
            <person name="Rodrigues J."/>
            <person name="Konstantinidis K."/>
            <person name="Tiedje J."/>
            <person name="Richardson P."/>
        </authorList>
    </citation>
    <scope>NUCLEOTIDE SEQUENCE [LARGE SCALE GENOMIC DNA]</scope>
    <source>
        <strain>OS185</strain>
    </source>
</reference>
<feature type="chain" id="PRO_1000022117" description="Isoleucine--tRNA ligase">
    <location>
        <begin position="1"/>
        <end position="940"/>
    </location>
</feature>
<feature type="short sequence motif" description="'HIGH' region">
    <location>
        <begin position="58"/>
        <end position="68"/>
    </location>
</feature>
<feature type="short sequence motif" description="'KMSKS' region">
    <location>
        <begin position="605"/>
        <end position="609"/>
    </location>
</feature>
<feature type="binding site" evidence="1">
    <location>
        <position position="564"/>
    </location>
    <ligand>
        <name>L-isoleucyl-5'-AMP</name>
        <dbReference type="ChEBI" id="CHEBI:178002"/>
    </ligand>
</feature>
<feature type="binding site" evidence="1">
    <location>
        <position position="608"/>
    </location>
    <ligand>
        <name>ATP</name>
        <dbReference type="ChEBI" id="CHEBI:30616"/>
    </ligand>
</feature>
<feature type="binding site" evidence="1">
    <location>
        <position position="903"/>
    </location>
    <ligand>
        <name>Zn(2+)</name>
        <dbReference type="ChEBI" id="CHEBI:29105"/>
    </ligand>
</feature>
<feature type="binding site" evidence="1">
    <location>
        <position position="906"/>
    </location>
    <ligand>
        <name>Zn(2+)</name>
        <dbReference type="ChEBI" id="CHEBI:29105"/>
    </ligand>
</feature>
<feature type="binding site" evidence="1">
    <location>
        <position position="923"/>
    </location>
    <ligand>
        <name>Zn(2+)</name>
        <dbReference type="ChEBI" id="CHEBI:29105"/>
    </ligand>
</feature>
<feature type="binding site" evidence="1">
    <location>
        <position position="926"/>
    </location>
    <ligand>
        <name>Zn(2+)</name>
        <dbReference type="ChEBI" id="CHEBI:29105"/>
    </ligand>
</feature>
<gene>
    <name evidence="1" type="primary">ileS</name>
    <name type="ordered locus">Shew185_1121</name>
</gene>
<evidence type="ECO:0000255" key="1">
    <source>
        <dbReference type="HAMAP-Rule" id="MF_02002"/>
    </source>
</evidence>
<name>SYI_SHEB8</name>
<dbReference type="EC" id="6.1.1.5" evidence="1"/>
<dbReference type="EMBL" id="CP000753">
    <property type="protein sequence ID" value="ABS07273.1"/>
    <property type="molecule type" value="Genomic_DNA"/>
</dbReference>
<dbReference type="RefSeq" id="WP_012088525.1">
    <property type="nucleotide sequence ID" value="NC_009665.1"/>
</dbReference>
<dbReference type="SMR" id="A6WKD4"/>
<dbReference type="KEGG" id="sbm:Shew185_1121"/>
<dbReference type="HOGENOM" id="CLU_001493_7_1_6"/>
<dbReference type="GO" id="GO:0005829">
    <property type="term" value="C:cytosol"/>
    <property type="evidence" value="ECO:0007669"/>
    <property type="project" value="TreeGrafter"/>
</dbReference>
<dbReference type="GO" id="GO:0002161">
    <property type="term" value="F:aminoacyl-tRNA deacylase activity"/>
    <property type="evidence" value="ECO:0007669"/>
    <property type="project" value="InterPro"/>
</dbReference>
<dbReference type="GO" id="GO:0005524">
    <property type="term" value="F:ATP binding"/>
    <property type="evidence" value="ECO:0007669"/>
    <property type="project" value="UniProtKB-UniRule"/>
</dbReference>
<dbReference type="GO" id="GO:0004822">
    <property type="term" value="F:isoleucine-tRNA ligase activity"/>
    <property type="evidence" value="ECO:0007669"/>
    <property type="project" value="UniProtKB-UniRule"/>
</dbReference>
<dbReference type="GO" id="GO:0000049">
    <property type="term" value="F:tRNA binding"/>
    <property type="evidence" value="ECO:0007669"/>
    <property type="project" value="InterPro"/>
</dbReference>
<dbReference type="GO" id="GO:0008270">
    <property type="term" value="F:zinc ion binding"/>
    <property type="evidence" value="ECO:0007669"/>
    <property type="project" value="UniProtKB-UniRule"/>
</dbReference>
<dbReference type="GO" id="GO:0006428">
    <property type="term" value="P:isoleucyl-tRNA aminoacylation"/>
    <property type="evidence" value="ECO:0007669"/>
    <property type="project" value="UniProtKB-UniRule"/>
</dbReference>
<dbReference type="CDD" id="cd07960">
    <property type="entry name" value="Anticodon_Ia_Ile_BEm"/>
    <property type="match status" value="1"/>
</dbReference>
<dbReference type="CDD" id="cd00818">
    <property type="entry name" value="IleRS_core"/>
    <property type="match status" value="1"/>
</dbReference>
<dbReference type="FunFam" id="1.10.730.20:FF:000001">
    <property type="entry name" value="Isoleucine--tRNA ligase"/>
    <property type="match status" value="1"/>
</dbReference>
<dbReference type="FunFam" id="3.40.50.620:FF:000042">
    <property type="entry name" value="Isoleucine--tRNA ligase"/>
    <property type="match status" value="1"/>
</dbReference>
<dbReference type="FunFam" id="3.40.50.620:FF:000048">
    <property type="entry name" value="Isoleucine--tRNA ligase"/>
    <property type="match status" value="1"/>
</dbReference>
<dbReference type="FunFam" id="3.90.740.10:FF:000022">
    <property type="entry name" value="Isoleucine--tRNA ligase"/>
    <property type="match status" value="1"/>
</dbReference>
<dbReference type="Gene3D" id="1.10.730.20">
    <property type="match status" value="1"/>
</dbReference>
<dbReference type="Gene3D" id="3.40.50.620">
    <property type="entry name" value="HUPs"/>
    <property type="match status" value="2"/>
</dbReference>
<dbReference type="HAMAP" id="MF_02002">
    <property type="entry name" value="Ile_tRNA_synth_type1"/>
    <property type="match status" value="1"/>
</dbReference>
<dbReference type="InterPro" id="IPR001412">
    <property type="entry name" value="aa-tRNA-synth_I_CS"/>
</dbReference>
<dbReference type="InterPro" id="IPR002300">
    <property type="entry name" value="aa-tRNA-synth_Ia"/>
</dbReference>
<dbReference type="InterPro" id="IPR033708">
    <property type="entry name" value="Anticodon_Ile_BEm"/>
</dbReference>
<dbReference type="InterPro" id="IPR002301">
    <property type="entry name" value="Ile-tRNA-ligase"/>
</dbReference>
<dbReference type="InterPro" id="IPR023585">
    <property type="entry name" value="Ile-tRNA-ligase_type1"/>
</dbReference>
<dbReference type="InterPro" id="IPR050081">
    <property type="entry name" value="Ile-tRNA_ligase"/>
</dbReference>
<dbReference type="InterPro" id="IPR013155">
    <property type="entry name" value="M/V/L/I-tRNA-synth_anticd-bd"/>
</dbReference>
<dbReference type="InterPro" id="IPR014729">
    <property type="entry name" value="Rossmann-like_a/b/a_fold"/>
</dbReference>
<dbReference type="InterPro" id="IPR009080">
    <property type="entry name" value="tRNAsynth_Ia_anticodon-bd"/>
</dbReference>
<dbReference type="InterPro" id="IPR009008">
    <property type="entry name" value="Val/Leu/Ile-tRNA-synth_edit"/>
</dbReference>
<dbReference type="InterPro" id="IPR010663">
    <property type="entry name" value="Znf_FPG/IleRS"/>
</dbReference>
<dbReference type="NCBIfam" id="TIGR00392">
    <property type="entry name" value="ileS"/>
    <property type="match status" value="1"/>
</dbReference>
<dbReference type="PANTHER" id="PTHR42765:SF1">
    <property type="entry name" value="ISOLEUCINE--TRNA LIGASE, MITOCHONDRIAL"/>
    <property type="match status" value="1"/>
</dbReference>
<dbReference type="PANTHER" id="PTHR42765">
    <property type="entry name" value="SOLEUCYL-TRNA SYNTHETASE"/>
    <property type="match status" value="1"/>
</dbReference>
<dbReference type="Pfam" id="PF08264">
    <property type="entry name" value="Anticodon_1"/>
    <property type="match status" value="1"/>
</dbReference>
<dbReference type="Pfam" id="PF00133">
    <property type="entry name" value="tRNA-synt_1"/>
    <property type="match status" value="1"/>
</dbReference>
<dbReference type="Pfam" id="PF06827">
    <property type="entry name" value="zf-FPG_IleRS"/>
    <property type="match status" value="1"/>
</dbReference>
<dbReference type="PRINTS" id="PR00984">
    <property type="entry name" value="TRNASYNTHILE"/>
</dbReference>
<dbReference type="SUPFAM" id="SSF47323">
    <property type="entry name" value="Anticodon-binding domain of a subclass of class I aminoacyl-tRNA synthetases"/>
    <property type="match status" value="1"/>
</dbReference>
<dbReference type="SUPFAM" id="SSF52374">
    <property type="entry name" value="Nucleotidylyl transferase"/>
    <property type="match status" value="1"/>
</dbReference>
<dbReference type="SUPFAM" id="SSF50677">
    <property type="entry name" value="ValRS/IleRS/LeuRS editing domain"/>
    <property type="match status" value="1"/>
</dbReference>
<dbReference type="PROSITE" id="PS00178">
    <property type="entry name" value="AA_TRNA_LIGASE_I"/>
    <property type="match status" value="1"/>
</dbReference>
<comment type="function">
    <text evidence="1">Catalyzes the attachment of isoleucine to tRNA(Ile). As IleRS can inadvertently accommodate and process structurally similar amino acids such as valine, to avoid such errors it has two additional distinct tRNA(Ile)-dependent editing activities. One activity is designated as 'pretransfer' editing and involves the hydrolysis of activated Val-AMP. The other activity is designated 'posttransfer' editing and involves deacylation of mischarged Val-tRNA(Ile).</text>
</comment>
<comment type="catalytic activity">
    <reaction evidence="1">
        <text>tRNA(Ile) + L-isoleucine + ATP = L-isoleucyl-tRNA(Ile) + AMP + diphosphate</text>
        <dbReference type="Rhea" id="RHEA:11060"/>
        <dbReference type="Rhea" id="RHEA-COMP:9666"/>
        <dbReference type="Rhea" id="RHEA-COMP:9695"/>
        <dbReference type="ChEBI" id="CHEBI:30616"/>
        <dbReference type="ChEBI" id="CHEBI:33019"/>
        <dbReference type="ChEBI" id="CHEBI:58045"/>
        <dbReference type="ChEBI" id="CHEBI:78442"/>
        <dbReference type="ChEBI" id="CHEBI:78528"/>
        <dbReference type="ChEBI" id="CHEBI:456215"/>
        <dbReference type="EC" id="6.1.1.5"/>
    </reaction>
</comment>
<comment type="cofactor">
    <cofactor evidence="1">
        <name>Zn(2+)</name>
        <dbReference type="ChEBI" id="CHEBI:29105"/>
    </cofactor>
    <text evidence="1">Binds 1 zinc ion per subunit.</text>
</comment>
<comment type="subunit">
    <text evidence="1">Monomer.</text>
</comment>
<comment type="subcellular location">
    <subcellularLocation>
        <location evidence="1">Cytoplasm</location>
    </subcellularLocation>
</comment>
<comment type="domain">
    <text evidence="1">IleRS has two distinct active sites: one for aminoacylation and one for editing. The misactivated valine is translocated from the active site to the editing site, which sterically excludes the correctly activated isoleucine. The single editing site contains two valyl binding pockets, one specific for each substrate (Val-AMP or Val-tRNA(Ile)).</text>
</comment>
<comment type="similarity">
    <text evidence="1">Belongs to the class-I aminoacyl-tRNA synthetase family. IleS type 1 subfamily.</text>
</comment>